<name>AZOR1_XANAC</name>
<protein>
    <recommendedName>
        <fullName evidence="1">FMN-dependent NADH:quinone oxidoreductase 1</fullName>
        <ecNumber evidence="1">1.6.5.-</ecNumber>
    </recommendedName>
    <alternativeName>
        <fullName evidence="1">Azo-dye reductase 1</fullName>
    </alternativeName>
    <alternativeName>
        <fullName evidence="1">FMN-dependent NADH-azo compound oxidoreductase 1</fullName>
    </alternativeName>
    <alternativeName>
        <fullName evidence="1">FMN-dependent NADH-azoreductase 1</fullName>
        <ecNumber evidence="1">1.7.1.17</ecNumber>
    </alternativeName>
</protein>
<sequence>MKLLHLDSSALGANSISRELSAAVVEQQRRLHPEVDVSYRDLDRDPIPHLTAQTLAQTDPAEAAAAEAVMQQFLQADVIVIGAPMYNFAIPSTLKAWIDRIAVAGRTFQYTANGPEGLAGGKRVIIASARGGLYADPTNDFQEPYLRQVLGFLGVDDISFVRAEGVAYSPQHRADALASALAGLSEEEAAAGA</sequence>
<organism>
    <name type="scientific">Xanthomonas axonopodis pv. citri (strain 306)</name>
    <dbReference type="NCBI Taxonomy" id="190486"/>
    <lineage>
        <taxon>Bacteria</taxon>
        <taxon>Pseudomonadati</taxon>
        <taxon>Pseudomonadota</taxon>
        <taxon>Gammaproteobacteria</taxon>
        <taxon>Lysobacterales</taxon>
        <taxon>Lysobacteraceae</taxon>
        <taxon>Xanthomonas</taxon>
    </lineage>
</organism>
<dbReference type="EC" id="1.6.5.-" evidence="1"/>
<dbReference type="EC" id="1.7.1.17" evidence="1"/>
<dbReference type="EMBL" id="AE008923">
    <property type="protein sequence ID" value="AAM36522.1"/>
    <property type="molecule type" value="Genomic_DNA"/>
</dbReference>
<dbReference type="RefSeq" id="WP_011051060.1">
    <property type="nucleotide sequence ID" value="NC_003919.1"/>
</dbReference>
<dbReference type="SMR" id="P58902"/>
<dbReference type="KEGG" id="xac:XAC1654"/>
<dbReference type="eggNOG" id="COG1182">
    <property type="taxonomic scope" value="Bacteria"/>
</dbReference>
<dbReference type="HOGENOM" id="CLU_088964_0_0_6"/>
<dbReference type="Proteomes" id="UP000000576">
    <property type="component" value="Chromosome"/>
</dbReference>
<dbReference type="GO" id="GO:0009055">
    <property type="term" value="F:electron transfer activity"/>
    <property type="evidence" value="ECO:0007669"/>
    <property type="project" value="UniProtKB-UniRule"/>
</dbReference>
<dbReference type="GO" id="GO:0010181">
    <property type="term" value="F:FMN binding"/>
    <property type="evidence" value="ECO:0007669"/>
    <property type="project" value="UniProtKB-UniRule"/>
</dbReference>
<dbReference type="GO" id="GO:0016652">
    <property type="term" value="F:oxidoreductase activity, acting on NAD(P)H as acceptor"/>
    <property type="evidence" value="ECO:0007669"/>
    <property type="project" value="UniProtKB-UniRule"/>
</dbReference>
<dbReference type="GO" id="GO:0016655">
    <property type="term" value="F:oxidoreductase activity, acting on NAD(P)H, quinone or similar compound as acceptor"/>
    <property type="evidence" value="ECO:0007669"/>
    <property type="project" value="InterPro"/>
</dbReference>
<dbReference type="Gene3D" id="3.40.50.360">
    <property type="match status" value="1"/>
</dbReference>
<dbReference type="HAMAP" id="MF_01216">
    <property type="entry name" value="Azoreductase_type1"/>
    <property type="match status" value="1"/>
</dbReference>
<dbReference type="InterPro" id="IPR003680">
    <property type="entry name" value="Flavodoxin_fold"/>
</dbReference>
<dbReference type="InterPro" id="IPR029039">
    <property type="entry name" value="Flavoprotein-like_sf"/>
</dbReference>
<dbReference type="InterPro" id="IPR050104">
    <property type="entry name" value="FMN-dep_NADH:Q_OxRdtase_AzoR1"/>
</dbReference>
<dbReference type="InterPro" id="IPR023048">
    <property type="entry name" value="NADH:quinone_OxRdtase_FMN_depd"/>
</dbReference>
<dbReference type="PANTHER" id="PTHR43741">
    <property type="entry name" value="FMN-DEPENDENT NADH-AZOREDUCTASE 1"/>
    <property type="match status" value="1"/>
</dbReference>
<dbReference type="PANTHER" id="PTHR43741:SF4">
    <property type="entry name" value="FMN-DEPENDENT NADH:QUINONE OXIDOREDUCTASE"/>
    <property type="match status" value="1"/>
</dbReference>
<dbReference type="Pfam" id="PF02525">
    <property type="entry name" value="Flavodoxin_2"/>
    <property type="match status" value="1"/>
</dbReference>
<dbReference type="SUPFAM" id="SSF52218">
    <property type="entry name" value="Flavoproteins"/>
    <property type="match status" value="1"/>
</dbReference>
<gene>
    <name evidence="1" type="primary">azoR1</name>
    <name type="ordered locus">XAC1654</name>
</gene>
<feature type="chain" id="PRO_0000166364" description="FMN-dependent NADH:quinone oxidoreductase 1">
    <location>
        <begin position="1"/>
        <end position="193"/>
    </location>
</feature>
<feature type="binding site" evidence="1">
    <location>
        <position position="9"/>
    </location>
    <ligand>
        <name>FMN</name>
        <dbReference type="ChEBI" id="CHEBI:58210"/>
    </ligand>
</feature>
<feature type="binding site" evidence="1">
    <location>
        <begin position="15"/>
        <end position="17"/>
    </location>
    <ligand>
        <name>FMN</name>
        <dbReference type="ChEBI" id="CHEBI:58210"/>
    </ligand>
</feature>
<feature type="binding site" evidence="1">
    <location>
        <begin position="85"/>
        <end position="88"/>
    </location>
    <ligand>
        <name>FMN</name>
        <dbReference type="ChEBI" id="CHEBI:58210"/>
    </ligand>
</feature>
<comment type="function">
    <text evidence="1">Quinone reductase that provides resistance to thiol-specific stress caused by electrophilic quinones.</text>
</comment>
<comment type="function">
    <text evidence="1">Also exhibits azoreductase activity. Catalyzes the reductive cleavage of the azo bond in aromatic azo compounds to the corresponding amines.</text>
</comment>
<comment type="catalytic activity">
    <reaction evidence="1">
        <text>2 a quinone + NADH + H(+) = 2 a 1,4-benzosemiquinone + NAD(+)</text>
        <dbReference type="Rhea" id="RHEA:65952"/>
        <dbReference type="ChEBI" id="CHEBI:15378"/>
        <dbReference type="ChEBI" id="CHEBI:57540"/>
        <dbReference type="ChEBI" id="CHEBI:57945"/>
        <dbReference type="ChEBI" id="CHEBI:132124"/>
        <dbReference type="ChEBI" id="CHEBI:134225"/>
    </reaction>
</comment>
<comment type="catalytic activity">
    <reaction evidence="1">
        <text>N,N-dimethyl-1,4-phenylenediamine + anthranilate + 2 NAD(+) = 2-(4-dimethylaminophenyl)diazenylbenzoate + 2 NADH + 2 H(+)</text>
        <dbReference type="Rhea" id="RHEA:55872"/>
        <dbReference type="ChEBI" id="CHEBI:15378"/>
        <dbReference type="ChEBI" id="CHEBI:15783"/>
        <dbReference type="ChEBI" id="CHEBI:16567"/>
        <dbReference type="ChEBI" id="CHEBI:57540"/>
        <dbReference type="ChEBI" id="CHEBI:57945"/>
        <dbReference type="ChEBI" id="CHEBI:71579"/>
        <dbReference type="EC" id="1.7.1.17"/>
    </reaction>
</comment>
<comment type="cofactor">
    <cofactor evidence="1">
        <name>FMN</name>
        <dbReference type="ChEBI" id="CHEBI:58210"/>
    </cofactor>
    <text evidence="1">Binds 1 FMN per subunit.</text>
</comment>
<comment type="subunit">
    <text evidence="1">Homodimer.</text>
</comment>
<comment type="similarity">
    <text evidence="1">Belongs to the azoreductase type 1 family.</text>
</comment>
<evidence type="ECO:0000255" key="1">
    <source>
        <dbReference type="HAMAP-Rule" id="MF_01216"/>
    </source>
</evidence>
<keyword id="KW-0285">Flavoprotein</keyword>
<keyword id="KW-0288">FMN</keyword>
<keyword id="KW-0520">NAD</keyword>
<keyword id="KW-0560">Oxidoreductase</keyword>
<accession>P58902</accession>
<reference key="1">
    <citation type="journal article" date="2002" name="Nature">
        <title>Comparison of the genomes of two Xanthomonas pathogens with differing host specificities.</title>
        <authorList>
            <person name="da Silva A.C.R."/>
            <person name="Ferro J.A."/>
            <person name="Reinach F.C."/>
            <person name="Farah C.S."/>
            <person name="Furlan L.R."/>
            <person name="Quaggio R.B."/>
            <person name="Monteiro-Vitorello C.B."/>
            <person name="Van Sluys M.A."/>
            <person name="Almeida N.F. Jr."/>
            <person name="Alves L.M.C."/>
            <person name="do Amaral A.M."/>
            <person name="Bertolini M.C."/>
            <person name="Camargo L.E.A."/>
            <person name="Camarotte G."/>
            <person name="Cannavan F."/>
            <person name="Cardozo J."/>
            <person name="Chambergo F."/>
            <person name="Ciapina L.P."/>
            <person name="Cicarelli R.M.B."/>
            <person name="Coutinho L.L."/>
            <person name="Cursino-Santos J.R."/>
            <person name="El-Dorry H."/>
            <person name="Faria J.B."/>
            <person name="Ferreira A.J.S."/>
            <person name="Ferreira R.C.C."/>
            <person name="Ferro M.I.T."/>
            <person name="Formighieri E.F."/>
            <person name="Franco M.C."/>
            <person name="Greggio C.C."/>
            <person name="Gruber A."/>
            <person name="Katsuyama A.M."/>
            <person name="Kishi L.T."/>
            <person name="Leite R.P."/>
            <person name="Lemos E.G.M."/>
            <person name="Lemos M.V.F."/>
            <person name="Locali E.C."/>
            <person name="Machado M.A."/>
            <person name="Madeira A.M.B.N."/>
            <person name="Martinez-Rossi N.M."/>
            <person name="Martins E.C."/>
            <person name="Meidanis J."/>
            <person name="Menck C.F.M."/>
            <person name="Miyaki C.Y."/>
            <person name="Moon D.H."/>
            <person name="Moreira L.M."/>
            <person name="Novo M.T.M."/>
            <person name="Okura V.K."/>
            <person name="Oliveira M.C."/>
            <person name="Oliveira V.R."/>
            <person name="Pereira H.A."/>
            <person name="Rossi A."/>
            <person name="Sena J.A.D."/>
            <person name="Silva C."/>
            <person name="de Souza R.F."/>
            <person name="Spinola L.A.F."/>
            <person name="Takita M.A."/>
            <person name="Tamura R.E."/>
            <person name="Teixeira E.C."/>
            <person name="Tezza R.I.D."/>
            <person name="Trindade dos Santos M."/>
            <person name="Truffi D."/>
            <person name="Tsai S.M."/>
            <person name="White F.F."/>
            <person name="Setubal J.C."/>
            <person name="Kitajima J.P."/>
        </authorList>
    </citation>
    <scope>NUCLEOTIDE SEQUENCE [LARGE SCALE GENOMIC DNA]</scope>
    <source>
        <strain>306</strain>
    </source>
</reference>
<proteinExistence type="inferred from homology"/>